<organism>
    <name type="scientific">Archaeoglobus fulgidus (strain ATCC 49558 / DSM 4304 / JCM 9628 / NBRC 100126 / VC-16)</name>
    <dbReference type="NCBI Taxonomy" id="224325"/>
    <lineage>
        <taxon>Archaea</taxon>
        <taxon>Methanobacteriati</taxon>
        <taxon>Methanobacteriota</taxon>
        <taxon>Archaeoglobi</taxon>
        <taxon>Archaeoglobales</taxon>
        <taxon>Archaeoglobaceae</taxon>
        <taxon>Archaeoglobus</taxon>
    </lineage>
</organism>
<accession>O28884</accession>
<protein>
    <recommendedName>
        <fullName>Uncharacterized protein AF_1387</fullName>
    </recommendedName>
</protein>
<dbReference type="EMBL" id="AE000782">
    <property type="protein sequence ID" value="AAB89882.1"/>
    <property type="molecule type" value="Genomic_DNA"/>
</dbReference>
<dbReference type="PIR" id="B69423">
    <property type="entry name" value="B69423"/>
</dbReference>
<dbReference type="RefSeq" id="WP_010878884.1">
    <property type="nucleotide sequence ID" value="NC_000917.1"/>
</dbReference>
<dbReference type="PaxDb" id="224325-AF_1387"/>
<dbReference type="EnsemblBacteria" id="AAB89882">
    <property type="protein sequence ID" value="AAB89882"/>
    <property type="gene ID" value="AF_1387"/>
</dbReference>
<dbReference type="GeneID" id="43496673"/>
<dbReference type="KEGG" id="afu:AF_1387"/>
<dbReference type="HOGENOM" id="CLU_3178375_0_0_2"/>
<dbReference type="OrthoDB" id="6744at2157"/>
<dbReference type="Proteomes" id="UP000002199">
    <property type="component" value="Chromosome"/>
</dbReference>
<sequence>MNNWWVYPCFEIDVVASGFDLPVAIAFPSEQRKGKNDVVELYGKVK</sequence>
<name>Y1387_ARCFU</name>
<reference key="1">
    <citation type="journal article" date="1997" name="Nature">
        <title>The complete genome sequence of the hyperthermophilic, sulphate-reducing archaeon Archaeoglobus fulgidus.</title>
        <authorList>
            <person name="Klenk H.-P."/>
            <person name="Clayton R.A."/>
            <person name="Tomb J.-F."/>
            <person name="White O."/>
            <person name="Nelson K.E."/>
            <person name="Ketchum K.A."/>
            <person name="Dodson R.J."/>
            <person name="Gwinn M.L."/>
            <person name="Hickey E.K."/>
            <person name="Peterson J.D."/>
            <person name="Richardson D.L."/>
            <person name="Kerlavage A.R."/>
            <person name="Graham D.E."/>
            <person name="Kyrpides N.C."/>
            <person name="Fleischmann R.D."/>
            <person name="Quackenbush J."/>
            <person name="Lee N.H."/>
            <person name="Sutton G.G."/>
            <person name="Gill S.R."/>
            <person name="Kirkness E.F."/>
            <person name="Dougherty B.A."/>
            <person name="McKenney K."/>
            <person name="Adams M.D."/>
            <person name="Loftus B.J."/>
            <person name="Peterson S.N."/>
            <person name="Reich C.I."/>
            <person name="McNeil L.K."/>
            <person name="Badger J.H."/>
            <person name="Glodek A."/>
            <person name="Zhou L."/>
            <person name="Overbeek R."/>
            <person name="Gocayne J.D."/>
            <person name="Weidman J.F."/>
            <person name="McDonald L.A."/>
            <person name="Utterback T.R."/>
            <person name="Cotton M.D."/>
            <person name="Spriggs T."/>
            <person name="Artiach P."/>
            <person name="Kaine B.P."/>
            <person name="Sykes S.M."/>
            <person name="Sadow P.W."/>
            <person name="D'Andrea K.P."/>
            <person name="Bowman C."/>
            <person name="Fujii C."/>
            <person name="Garland S.A."/>
            <person name="Mason T.M."/>
            <person name="Olsen G.J."/>
            <person name="Fraser C.M."/>
            <person name="Smith H.O."/>
            <person name="Woese C.R."/>
            <person name="Venter J.C."/>
        </authorList>
    </citation>
    <scope>NUCLEOTIDE SEQUENCE [LARGE SCALE GENOMIC DNA]</scope>
    <source>
        <strain>ATCC 49558 / DSM 4304 / JCM 9628 / NBRC 100126 / VC-16</strain>
    </source>
</reference>
<gene>
    <name type="ordered locus">AF_1387</name>
</gene>
<keyword id="KW-1185">Reference proteome</keyword>
<proteinExistence type="predicted"/>
<feature type="chain" id="PRO_0000127995" description="Uncharacterized protein AF_1387">
    <location>
        <begin position="1"/>
        <end position="46"/>
    </location>
</feature>